<reference key="1">
    <citation type="journal article" date="2006" name="PLoS Genet.">
        <title>Comparative genomics of emerging human ehrlichiosis agents.</title>
        <authorList>
            <person name="Dunning Hotopp J.C."/>
            <person name="Lin M."/>
            <person name="Madupu R."/>
            <person name="Crabtree J."/>
            <person name="Angiuoli S.V."/>
            <person name="Eisen J.A."/>
            <person name="Seshadri R."/>
            <person name="Ren Q."/>
            <person name="Wu M."/>
            <person name="Utterback T.R."/>
            <person name="Smith S."/>
            <person name="Lewis M."/>
            <person name="Khouri H."/>
            <person name="Zhang C."/>
            <person name="Niu H."/>
            <person name="Lin Q."/>
            <person name="Ohashi N."/>
            <person name="Zhi N."/>
            <person name="Nelson W.C."/>
            <person name="Brinkac L.M."/>
            <person name="Dodson R.J."/>
            <person name="Rosovitz M.J."/>
            <person name="Sundaram J.P."/>
            <person name="Daugherty S.C."/>
            <person name="Davidsen T."/>
            <person name="Durkin A.S."/>
            <person name="Gwinn M.L."/>
            <person name="Haft D.H."/>
            <person name="Selengut J.D."/>
            <person name="Sullivan S.A."/>
            <person name="Zafar N."/>
            <person name="Zhou L."/>
            <person name="Benahmed F."/>
            <person name="Forberger H."/>
            <person name="Halpin R."/>
            <person name="Mulligan S."/>
            <person name="Robinson J."/>
            <person name="White O."/>
            <person name="Rikihisa Y."/>
            <person name="Tettelin H."/>
        </authorList>
    </citation>
    <scope>NUCLEOTIDE SEQUENCE [LARGE SCALE GENOMIC DNA]</scope>
    <source>
        <strain>ATCC VR-367 / Miyayama</strain>
    </source>
</reference>
<organism>
    <name type="scientific">Neorickettsia sennetsu (strain ATCC VR-367 / Miyayama)</name>
    <name type="common">Ehrlichia sennetsu</name>
    <dbReference type="NCBI Taxonomy" id="222891"/>
    <lineage>
        <taxon>Bacteria</taxon>
        <taxon>Pseudomonadati</taxon>
        <taxon>Pseudomonadota</taxon>
        <taxon>Alphaproteobacteria</taxon>
        <taxon>Rickettsiales</taxon>
        <taxon>Anaplasmataceae</taxon>
        <taxon>Neorickettsia</taxon>
    </lineage>
</organism>
<feature type="chain" id="PRO_1000056383" description="Beta-ketoacyl-[acyl-carrier-protein] synthase III">
    <location>
        <begin position="1"/>
        <end position="311"/>
    </location>
</feature>
<feature type="region of interest" description="ACP-binding" evidence="1">
    <location>
        <begin position="239"/>
        <end position="243"/>
    </location>
</feature>
<feature type="active site" evidence="1">
    <location>
        <position position="114"/>
    </location>
</feature>
<feature type="active site" evidence="1">
    <location>
        <position position="238"/>
    </location>
</feature>
<feature type="active site" evidence="1">
    <location>
        <position position="268"/>
    </location>
</feature>
<evidence type="ECO:0000255" key="1">
    <source>
        <dbReference type="HAMAP-Rule" id="MF_01815"/>
    </source>
</evidence>
<accession>Q2GDD8</accession>
<dbReference type="EC" id="2.3.1.180" evidence="1"/>
<dbReference type="EMBL" id="CP000237">
    <property type="protein sequence ID" value="ABD46266.1"/>
    <property type="molecule type" value="Genomic_DNA"/>
</dbReference>
<dbReference type="RefSeq" id="WP_011452014.1">
    <property type="nucleotide sequence ID" value="NC_007798.1"/>
</dbReference>
<dbReference type="SMR" id="Q2GDD8"/>
<dbReference type="STRING" id="222891.NSE_0630"/>
<dbReference type="KEGG" id="nse:NSE_0630"/>
<dbReference type="eggNOG" id="COG0332">
    <property type="taxonomic scope" value="Bacteria"/>
</dbReference>
<dbReference type="HOGENOM" id="CLU_039592_4_2_5"/>
<dbReference type="OrthoDB" id="9815506at2"/>
<dbReference type="UniPathway" id="UPA00094"/>
<dbReference type="Proteomes" id="UP000001942">
    <property type="component" value="Chromosome"/>
</dbReference>
<dbReference type="GO" id="GO:0005737">
    <property type="term" value="C:cytoplasm"/>
    <property type="evidence" value="ECO:0007669"/>
    <property type="project" value="UniProtKB-SubCell"/>
</dbReference>
<dbReference type="GO" id="GO:0004315">
    <property type="term" value="F:3-oxoacyl-[acyl-carrier-protein] synthase activity"/>
    <property type="evidence" value="ECO:0007669"/>
    <property type="project" value="InterPro"/>
</dbReference>
<dbReference type="GO" id="GO:0033818">
    <property type="term" value="F:beta-ketoacyl-acyl-carrier-protein synthase III activity"/>
    <property type="evidence" value="ECO:0007669"/>
    <property type="project" value="UniProtKB-UniRule"/>
</dbReference>
<dbReference type="GO" id="GO:0006633">
    <property type="term" value="P:fatty acid biosynthetic process"/>
    <property type="evidence" value="ECO:0007669"/>
    <property type="project" value="UniProtKB-UniRule"/>
</dbReference>
<dbReference type="GO" id="GO:0044550">
    <property type="term" value="P:secondary metabolite biosynthetic process"/>
    <property type="evidence" value="ECO:0007669"/>
    <property type="project" value="TreeGrafter"/>
</dbReference>
<dbReference type="CDD" id="cd00830">
    <property type="entry name" value="KAS_III"/>
    <property type="match status" value="1"/>
</dbReference>
<dbReference type="Gene3D" id="3.40.47.10">
    <property type="match status" value="1"/>
</dbReference>
<dbReference type="HAMAP" id="MF_01815">
    <property type="entry name" value="FabH"/>
    <property type="match status" value="1"/>
</dbReference>
<dbReference type="InterPro" id="IPR013747">
    <property type="entry name" value="ACP_syn_III_C"/>
</dbReference>
<dbReference type="InterPro" id="IPR013751">
    <property type="entry name" value="ACP_syn_III_N"/>
</dbReference>
<dbReference type="InterPro" id="IPR004655">
    <property type="entry name" value="FabH"/>
</dbReference>
<dbReference type="InterPro" id="IPR016039">
    <property type="entry name" value="Thiolase-like"/>
</dbReference>
<dbReference type="NCBIfam" id="TIGR00747">
    <property type="entry name" value="fabH"/>
    <property type="match status" value="1"/>
</dbReference>
<dbReference type="NCBIfam" id="NF006829">
    <property type="entry name" value="PRK09352.1"/>
    <property type="match status" value="1"/>
</dbReference>
<dbReference type="PANTHER" id="PTHR34069">
    <property type="entry name" value="3-OXOACYL-[ACYL-CARRIER-PROTEIN] SYNTHASE 3"/>
    <property type="match status" value="1"/>
</dbReference>
<dbReference type="PANTHER" id="PTHR34069:SF2">
    <property type="entry name" value="BETA-KETOACYL-[ACYL-CARRIER-PROTEIN] SYNTHASE III"/>
    <property type="match status" value="1"/>
</dbReference>
<dbReference type="Pfam" id="PF08545">
    <property type="entry name" value="ACP_syn_III"/>
    <property type="match status" value="1"/>
</dbReference>
<dbReference type="Pfam" id="PF08541">
    <property type="entry name" value="ACP_syn_III_C"/>
    <property type="match status" value="1"/>
</dbReference>
<dbReference type="SUPFAM" id="SSF53901">
    <property type="entry name" value="Thiolase-like"/>
    <property type="match status" value="1"/>
</dbReference>
<comment type="function">
    <text evidence="1">Catalyzes the condensation reaction of fatty acid synthesis by the addition to an acyl acceptor of two carbons from malonyl-ACP. Catalyzes the first condensation reaction which initiates fatty acid synthesis and may therefore play a role in governing the total rate of fatty acid production. Possesses both acetoacetyl-ACP synthase and acetyl transacylase activities. Its substrate specificity determines the biosynthesis of branched-chain and/or straight-chain of fatty acids.</text>
</comment>
<comment type="catalytic activity">
    <reaction evidence="1">
        <text>malonyl-[ACP] + acetyl-CoA + H(+) = 3-oxobutanoyl-[ACP] + CO2 + CoA</text>
        <dbReference type="Rhea" id="RHEA:12080"/>
        <dbReference type="Rhea" id="RHEA-COMP:9623"/>
        <dbReference type="Rhea" id="RHEA-COMP:9625"/>
        <dbReference type="ChEBI" id="CHEBI:15378"/>
        <dbReference type="ChEBI" id="CHEBI:16526"/>
        <dbReference type="ChEBI" id="CHEBI:57287"/>
        <dbReference type="ChEBI" id="CHEBI:57288"/>
        <dbReference type="ChEBI" id="CHEBI:78449"/>
        <dbReference type="ChEBI" id="CHEBI:78450"/>
        <dbReference type="EC" id="2.3.1.180"/>
    </reaction>
</comment>
<comment type="pathway">
    <text evidence="1">Lipid metabolism; fatty acid biosynthesis.</text>
</comment>
<comment type="subunit">
    <text evidence="1">Homodimer.</text>
</comment>
<comment type="subcellular location">
    <subcellularLocation>
        <location evidence="1">Cytoplasm</location>
    </subcellularLocation>
</comment>
<comment type="domain">
    <text evidence="1">The last Arg residue of the ACP-binding site is essential for the weak association between ACP/AcpP and FabH.</text>
</comment>
<comment type="similarity">
    <text evidence="1">Belongs to the thiolase-like superfamily. FabH family.</text>
</comment>
<name>FABH_NEOSM</name>
<proteinExistence type="inferred from homology"/>
<gene>
    <name evidence="1" type="primary">fabH</name>
    <name type="ordered locus">NSE_0630</name>
</gene>
<protein>
    <recommendedName>
        <fullName evidence="1">Beta-ketoacyl-[acyl-carrier-protein] synthase III</fullName>
        <shortName evidence="1">Beta-ketoacyl-ACP synthase III</shortName>
        <shortName evidence="1">KAS III</shortName>
        <ecNumber evidence="1">2.3.1.180</ecNumber>
    </recommendedName>
    <alternativeName>
        <fullName evidence="1">3-oxoacyl-[acyl-carrier-protein] synthase 3</fullName>
    </alternativeName>
    <alternativeName>
        <fullName evidence="1">3-oxoacyl-[acyl-carrier-protein] synthase III</fullName>
    </alternativeName>
</protein>
<keyword id="KW-0012">Acyltransferase</keyword>
<keyword id="KW-0963">Cytoplasm</keyword>
<keyword id="KW-0275">Fatty acid biosynthesis</keyword>
<keyword id="KW-0276">Fatty acid metabolism</keyword>
<keyword id="KW-0444">Lipid biosynthesis</keyword>
<keyword id="KW-0443">Lipid metabolism</keyword>
<keyword id="KW-0511">Multifunctional enzyme</keyword>
<keyword id="KW-0808">Transferase</keyword>
<sequence>MKKTNFLSFGCYLPKKVLTNFDLEELVDTSDEWILRRTGIKTRYIAEEEDVCELAFRASLNCLERAMHFSQKEVDAIIVATCTANKRLPAVANMLQARLGIGRHILSFDVNAACTGFLYALSIVDAMIVSGKVSTVLLVGAEAMSTIIDWNDRNTCVLFGDGAGAVLVSAGDSGGVLYEHMACDSSLGEALLAEVGGTLKMDGRSVFEAAIKRLTLAIGEALKTTGISVEELDYFIMHQANIRIIELIGEKIGIDRSKIIVTVDRYANTSAASIPITLAYMDSHGSIRKGAKILFAAMGAGFTYGVTIFEY</sequence>